<reference key="1">
    <citation type="book" date="2006" name="Gram positive pathogens, 2nd edition">
        <title>The Staphylococcus aureus NCTC 8325 genome.</title>
        <editorList>
            <person name="Fischetti V."/>
            <person name="Novick R."/>
            <person name="Ferretti J."/>
            <person name="Portnoy D."/>
            <person name="Rood J."/>
        </editorList>
        <authorList>
            <person name="Gillaspy A.F."/>
            <person name="Worrell V."/>
            <person name="Orvis J."/>
            <person name="Roe B.A."/>
            <person name="Dyer D.W."/>
            <person name="Iandolo J.J."/>
        </authorList>
    </citation>
    <scope>NUCLEOTIDE SEQUENCE [LARGE SCALE GENOMIC DNA]</scope>
    <source>
        <strain>NCTC 8325 / PS 47</strain>
    </source>
</reference>
<sequence length="166" mass="18475">MITYKNILIAVDGSHEAEWAFNRAVGVAKRNDAKLTIVNVIDSRTYSSYEVYDAQFTEKSKHFAEELLNGYKEVATNAGVKDVETRLEFGSPKSIIPKKLAHEINADLIMSGTSGLNAVERFIVGSVSESIVRHAPCDVLVVRTEELPADFQPQVATTQLREKYQN</sequence>
<organism>
    <name type="scientific">Staphylococcus aureus (strain NCTC 8325 / PS 47)</name>
    <dbReference type="NCBI Taxonomy" id="93061"/>
    <lineage>
        <taxon>Bacteria</taxon>
        <taxon>Bacillati</taxon>
        <taxon>Bacillota</taxon>
        <taxon>Bacilli</taxon>
        <taxon>Bacillales</taxon>
        <taxon>Staphylococcaceae</taxon>
        <taxon>Staphylococcus</taxon>
    </lineage>
</organism>
<gene>
    <name type="ordered locus">SAOUHSC_01819</name>
</gene>
<comment type="subcellular location">
    <subcellularLocation>
        <location evidence="1">Cytoplasm</location>
    </subcellularLocation>
</comment>
<comment type="similarity">
    <text evidence="2">Belongs to the universal stress protein A family.</text>
</comment>
<feature type="chain" id="PRO_0000288896" description="Putative universal stress protein SAOUHSC_01819">
    <location>
        <begin position="1"/>
        <end position="166"/>
    </location>
</feature>
<keyword id="KW-0963">Cytoplasm</keyword>
<keyword id="KW-1185">Reference proteome</keyword>
<accession>Q2FXL6</accession>
<protein>
    <recommendedName>
        <fullName>Putative universal stress protein SAOUHSC_01819</fullName>
    </recommendedName>
</protein>
<evidence type="ECO:0000250" key="1"/>
<evidence type="ECO:0000305" key="2"/>
<name>Y1819_STAA8</name>
<proteinExistence type="inferred from homology"/>
<dbReference type="EMBL" id="CP000253">
    <property type="protein sequence ID" value="ABD30887.1"/>
    <property type="molecule type" value="Genomic_DNA"/>
</dbReference>
<dbReference type="RefSeq" id="WP_000634175.1">
    <property type="nucleotide sequence ID" value="NZ_LS483365.1"/>
</dbReference>
<dbReference type="RefSeq" id="YP_500324.1">
    <property type="nucleotide sequence ID" value="NC_007795.1"/>
</dbReference>
<dbReference type="SMR" id="Q2FXL6"/>
<dbReference type="STRING" id="93061.SAOUHSC_01819"/>
<dbReference type="PaxDb" id="1280-SAXN108_1738"/>
<dbReference type="GeneID" id="3919289"/>
<dbReference type="KEGG" id="sao:SAOUHSC_01819"/>
<dbReference type="PATRIC" id="fig|93061.5.peg.1658"/>
<dbReference type="eggNOG" id="COG0589">
    <property type="taxonomic scope" value="Bacteria"/>
</dbReference>
<dbReference type="HOGENOM" id="CLU_049301_16_0_9"/>
<dbReference type="OrthoDB" id="9789668at2"/>
<dbReference type="PRO" id="PR:Q2FXL6"/>
<dbReference type="Proteomes" id="UP000008816">
    <property type="component" value="Chromosome"/>
</dbReference>
<dbReference type="GO" id="GO:0005737">
    <property type="term" value="C:cytoplasm"/>
    <property type="evidence" value="ECO:0007669"/>
    <property type="project" value="UniProtKB-SubCell"/>
</dbReference>
<dbReference type="CDD" id="cd00293">
    <property type="entry name" value="USP-like"/>
    <property type="match status" value="1"/>
</dbReference>
<dbReference type="Gene3D" id="3.40.50.620">
    <property type="entry name" value="HUPs"/>
    <property type="match status" value="1"/>
</dbReference>
<dbReference type="InterPro" id="IPR014729">
    <property type="entry name" value="Rossmann-like_a/b/a_fold"/>
</dbReference>
<dbReference type="InterPro" id="IPR006015">
    <property type="entry name" value="Universal_stress_UspA"/>
</dbReference>
<dbReference type="InterPro" id="IPR006016">
    <property type="entry name" value="UspA"/>
</dbReference>
<dbReference type="PANTHER" id="PTHR46268">
    <property type="entry name" value="STRESS RESPONSE PROTEIN NHAX"/>
    <property type="match status" value="1"/>
</dbReference>
<dbReference type="PANTHER" id="PTHR46268:SF6">
    <property type="entry name" value="UNIVERSAL STRESS PROTEIN UP12"/>
    <property type="match status" value="1"/>
</dbReference>
<dbReference type="Pfam" id="PF00582">
    <property type="entry name" value="Usp"/>
    <property type="match status" value="1"/>
</dbReference>
<dbReference type="PIRSF" id="PIRSF006276">
    <property type="entry name" value="UspA"/>
    <property type="match status" value="1"/>
</dbReference>
<dbReference type="PRINTS" id="PR01438">
    <property type="entry name" value="UNVRSLSTRESS"/>
</dbReference>
<dbReference type="SUPFAM" id="SSF52402">
    <property type="entry name" value="Adenine nucleotide alpha hydrolases-like"/>
    <property type="match status" value="1"/>
</dbReference>